<dbReference type="EMBL" id="CP000247">
    <property type="protein sequence ID" value="ABG68097.1"/>
    <property type="molecule type" value="Genomic_DNA"/>
</dbReference>
<dbReference type="RefSeq" id="WP_000746171.1">
    <property type="nucleotide sequence ID" value="NC_008253.1"/>
</dbReference>
<dbReference type="SMR" id="Q0TLT4"/>
<dbReference type="KEGG" id="ecp:ECP_0057"/>
<dbReference type="HOGENOM" id="CLU_009039_2_0_6"/>
<dbReference type="Proteomes" id="UP000009182">
    <property type="component" value="Chromosome"/>
</dbReference>
<dbReference type="GO" id="GO:0009279">
    <property type="term" value="C:cell outer membrane"/>
    <property type="evidence" value="ECO:0007669"/>
    <property type="project" value="UniProtKB-SubCell"/>
</dbReference>
<dbReference type="GO" id="GO:1990351">
    <property type="term" value="C:transporter complex"/>
    <property type="evidence" value="ECO:0007669"/>
    <property type="project" value="TreeGrafter"/>
</dbReference>
<dbReference type="GO" id="GO:0043165">
    <property type="term" value="P:Gram-negative-bacterium-type cell outer membrane assembly"/>
    <property type="evidence" value="ECO:0007669"/>
    <property type="project" value="UniProtKB-UniRule"/>
</dbReference>
<dbReference type="GO" id="GO:0015920">
    <property type="term" value="P:lipopolysaccharide transport"/>
    <property type="evidence" value="ECO:0007669"/>
    <property type="project" value="InterPro"/>
</dbReference>
<dbReference type="FunFam" id="2.60.450.10:FF:000003">
    <property type="entry name" value="LPS-assembly protein LptD"/>
    <property type="match status" value="1"/>
</dbReference>
<dbReference type="Gene3D" id="2.60.450.10">
    <property type="entry name" value="Lipopolysaccharide (LPS) transport protein A like domain"/>
    <property type="match status" value="1"/>
</dbReference>
<dbReference type="HAMAP" id="MF_01411">
    <property type="entry name" value="LPS_assembly_LptD"/>
    <property type="match status" value="1"/>
</dbReference>
<dbReference type="InterPro" id="IPR020889">
    <property type="entry name" value="LipoPS_assembly_LptD"/>
</dbReference>
<dbReference type="InterPro" id="IPR050218">
    <property type="entry name" value="LptD"/>
</dbReference>
<dbReference type="InterPro" id="IPR007543">
    <property type="entry name" value="LptD_C"/>
</dbReference>
<dbReference type="InterPro" id="IPR005653">
    <property type="entry name" value="OstA-like_N"/>
</dbReference>
<dbReference type="NCBIfam" id="NF002997">
    <property type="entry name" value="PRK03761.1"/>
    <property type="match status" value="1"/>
</dbReference>
<dbReference type="PANTHER" id="PTHR30189">
    <property type="entry name" value="LPS-ASSEMBLY PROTEIN"/>
    <property type="match status" value="1"/>
</dbReference>
<dbReference type="PANTHER" id="PTHR30189:SF1">
    <property type="entry name" value="LPS-ASSEMBLY PROTEIN LPTD"/>
    <property type="match status" value="1"/>
</dbReference>
<dbReference type="Pfam" id="PF04453">
    <property type="entry name" value="LptD"/>
    <property type="match status" value="1"/>
</dbReference>
<dbReference type="Pfam" id="PF03968">
    <property type="entry name" value="LptD_N"/>
    <property type="match status" value="1"/>
</dbReference>
<gene>
    <name evidence="1" type="primary">lptD</name>
    <name type="synonym">imp</name>
    <name type="synonym">ostA</name>
    <name type="ordered locus">ECP_0057</name>
</gene>
<feature type="signal peptide" evidence="1">
    <location>
        <begin position="1"/>
        <end position="24"/>
    </location>
</feature>
<feature type="chain" id="PRO_0000281603" description="LPS-assembly protein LptD">
    <location>
        <begin position="25"/>
        <end position="784"/>
    </location>
</feature>
<feature type="disulfide bond" evidence="1">
    <location>
        <begin position="31"/>
        <end position="724"/>
    </location>
</feature>
<feature type="disulfide bond" evidence="1">
    <location>
        <begin position="173"/>
        <end position="725"/>
    </location>
</feature>
<comment type="function">
    <text evidence="1">Together with LptE, is involved in the assembly of lipopolysaccharide (LPS) at the surface of the outer membrane.</text>
</comment>
<comment type="subunit">
    <text evidence="1">Component of the lipopolysaccharide transport and assembly complex. Interacts with LptE and LptA.</text>
</comment>
<comment type="subcellular location">
    <subcellularLocation>
        <location evidence="1">Cell outer membrane</location>
    </subcellularLocation>
</comment>
<comment type="PTM">
    <text evidence="1">Contains two intramolecular disulfide bonds.</text>
</comment>
<comment type="similarity">
    <text evidence="1">Belongs to the LptD family.</text>
</comment>
<protein>
    <recommendedName>
        <fullName evidence="1">LPS-assembly protein LptD</fullName>
    </recommendedName>
</protein>
<keyword id="KW-0998">Cell outer membrane</keyword>
<keyword id="KW-1015">Disulfide bond</keyword>
<keyword id="KW-0472">Membrane</keyword>
<keyword id="KW-0732">Signal</keyword>
<name>LPTD_ECOL5</name>
<proteinExistence type="inferred from homology"/>
<sequence>MKKRIPTLLATMIATALYSQQGLAADLASQCMLGVPSYDRPLVQGDTNDLPVTINADHAKGDYPDDAVFTGSVDIMQGNSRLQADEVQLHQKEAPGQPEPVRTVDALGNVHYDDNQVILKGPKGWANLNTKDTNVWEGDYQMVGRQGRGKADLMKQRGENRYTILDNGSFTSCLPGSDTWSVVGSEIIHDREEQVAEIWNARFKVGPVPIFYSPYLQLPVGDKRRSGFLIPNAKYTTTNYFEFYLPYYWNIAPNMDATITPHYMHRRGNIMWENEFRYLSQAGAGLMELDYLPSDKVYKDEHPNDDSSRRWLFYWNHSGVMDQVWRFNVDYTKVSDPSYFNDFDNKYGSSTDGYATQKFSVGYAVQNFNATVSTKQFQVFSEQNTSSYSAEPQLDVNYYQNDVGPFDTRIYGQAVHFVNTRDDMPEATRVHLEPTINLPLSNNWGSINTEAKLLATHYQQTNLDWYNSRNTTRLAESANRVMPQFKVDGRMVFERDMEMLAPGYTQTLEPRAQYLYVPYRDQSKIYNYDSSLLQSDYSGLFRDRTYGGLDRIASANQVTTGVTSRIYDDAAVERFNISVGQIYYFTESRTGDDNITWENDDKTGSLVWAGDTYWRISDRWGLRGGIQYDTRLDNVATSNSSIEYRRDEDRLVQLNYRYASPEYIQATLPKYYSTAEQYKNGISQVGAVASWPIADRWSIVGAYYYDTNANKQADSMLGVQYSSCCYAIRVGYERKLNGWDNDKQHAVYDNAIGFNIELRGLSSNYGLGTQEMLRSNILPYQNTL</sequence>
<accession>Q0TLT4</accession>
<reference key="1">
    <citation type="journal article" date="2006" name="Mol. Microbiol.">
        <title>Role of pathogenicity island-associated integrases in the genome plasticity of uropathogenic Escherichia coli strain 536.</title>
        <authorList>
            <person name="Hochhut B."/>
            <person name="Wilde C."/>
            <person name="Balling G."/>
            <person name="Middendorf B."/>
            <person name="Dobrindt U."/>
            <person name="Brzuszkiewicz E."/>
            <person name="Gottschalk G."/>
            <person name="Carniel E."/>
            <person name="Hacker J."/>
        </authorList>
    </citation>
    <scope>NUCLEOTIDE SEQUENCE [LARGE SCALE GENOMIC DNA]</scope>
    <source>
        <strain>536 / UPEC</strain>
    </source>
</reference>
<organism>
    <name type="scientific">Escherichia coli O6:K15:H31 (strain 536 / UPEC)</name>
    <dbReference type="NCBI Taxonomy" id="362663"/>
    <lineage>
        <taxon>Bacteria</taxon>
        <taxon>Pseudomonadati</taxon>
        <taxon>Pseudomonadota</taxon>
        <taxon>Gammaproteobacteria</taxon>
        <taxon>Enterobacterales</taxon>
        <taxon>Enterobacteriaceae</taxon>
        <taxon>Escherichia</taxon>
    </lineage>
</organism>
<evidence type="ECO:0000255" key="1">
    <source>
        <dbReference type="HAMAP-Rule" id="MF_01411"/>
    </source>
</evidence>